<sequence length="259" mass="27456">MLAKRIIPCLDVTGGRVVKGVNFVELRDAGDPVEIAARYNAQGADELTFLDITATSDERDLILPIIEAVASQVFIPLTVGGGVRTVEDVRRLLNAGADKTSFNSAAIANPDVISQASAKYGAQCIVVAIDAKRRQGAEVAERGEGWDVYSHGGRKNTGLDAVQWAVEMARRGAGEILLTSMDRDGTKSGFDLQLTRAVSDAVGVPVIASGGVGNLDHLADGVQQGGADAVLAASIFHYGEFTVRQAKERMRERGIPVRL</sequence>
<comment type="function">
    <text evidence="1">IGPS catalyzes the conversion of PRFAR and glutamine to IGP, AICAR and glutamate. The HisF subunit catalyzes the cyclization activity that produces IGP and AICAR from PRFAR using the ammonia provided by the HisH subunit.</text>
</comment>
<comment type="catalytic activity">
    <reaction evidence="1">
        <text>5-[(5-phospho-1-deoxy-D-ribulos-1-ylimino)methylamino]-1-(5-phospho-beta-D-ribosyl)imidazole-4-carboxamide + L-glutamine = D-erythro-1-(imidazol-4-yl)glycerol 3-phosphate + 5-amino-1-(5-phospho-beta-D-ribosyl)imidazole-4-carboxamide + L-glutamate + H(+)</text>
        <dbReference type="Rhea" id="RHEA:24793"/>
        <dbReference type="ChEBI" id="CHEBI:15378"/>
        <dbReference type="ChEBI" id="CHEBI:29985"/>
        <dbReference type="ChEBI" id="CHEBI:58278"/>
        <dbReference type="ChEBI" id="CHEBI:58359"/>
        <dbReference type="ChEBI" id="CHEBI:58475"/>
        <dbReference type="ChEBI" id="CHEBI:58525"/>
        <dbReference type="EC" id="4.3.2.10"/>
    </reaction>
</comment>
<comment type="pathway">
    <text evidence="1">Amino-acid biosynthesis; L-histidine biosynthesis; L-histidine from 5-phospho-alpha-D-ribose 1-diphosphate: step 5/9.</text>
</comment>
<comment type="subunit">
    <text evidence="1">Heterodimer of HisH and HisF.</text>
</comment>
<comment type="subcellular location">
    <subcellularLocation>
        <location evidence="1">Cytoplasm</location>
    </subcellularLocation>
</comment>
<comment type="similarity">
    <text evidence="1">Belongs to the HisA/HisF family.</text>
</comment>
<dbReference type="EC" id="4.3.2.10" evidence="1"/>
<dbReference type="EMBL" id="CP000539">
    <property type="protein sequence ID" value="ABM41019.1"/>
    <property type="molecule type" value="Genomic_DNA"/>
</dbReference>
<dbReference type="SMR" id="A1W444"/>
<dbReference type="STRING" id="232721.Ajs_0775"/>
<dbReference type="KEGG" id="ajs:Ajs_0775"/>
<dbReference type="eggNOG" id="COG0107">
    <property type="taxonomic scope" value="Bacteria"/>
</dbReference>
<dbReference type="HOGENOM" id="CLU_048577_4_0_4"/>
<dbReference type="UniPathway" id="UPA00031">
    <property type="reaction ID" value="UER00010"/>
</dbReference>
<dbReference type="Proteomes" id="UP000000645">
    <property type="component" value="Chromosome"/>
</dbReference>
<dbReference type="GO" id="GO:0005737">
    <property type="term" value="C:cytoplasm"/>
    <property type="evidence" value="ECO:0007669"/>
    <property type="project" value="UniProtKB-SubCell"/>
</dbReference>
<dbReference type="GO" id="GO:0000107">
    <property type="term" value="F:imidazoleglycerol-phosphate synthase activity"/>
    <property type="evidence" value="ECO:0007669"/>
    <property type="project" value="UniProtKB-UniRule"/>
</dbReference>
<dbReference type="GO" id="GO:0016829">
    <property type="term" value="F:lyase activity"/>
    <property type="evidence" value="ECO:0007669"/>
    <property type="project" value="UniProtKB-KW"/>
</dbReference>
<dbReference type="GO" id="GO:0000105">
    <property type="term" value="P:L-histidine biosynthetic process"/>
    <property type="evidence" value="ECO:0007669"/>
    <property type="project" value="UniProtKB-UniRule"/>
</dbReference>
<dbReference type="CDD" id="cd04731">
    <property type="entry name" value="HisF"/>
    <property type="match status" value="1"/>
</dbReference>
<dbReference type="FunFam" id="3.20.20.70:FF:000006">
    <property type="entry name" value="Imidazole glycerol phosphate synthase subunit HisF"/>
    <property type="match status" value="1"/>
</dbReference>
<dbReference type="Gene3D" id="3.20.20.70">
    <property type="entry name" value="Aldolase class I"/>
    <property type="match status" value="1"/>
</dbReference>
<dbReference type="HAMAP" id="MF_01013">
    <property type="entry name" value="HisF"/>
    <property type="match status" value="1"/>
</dbReference>
<dbReference type="InterPro" id="IPR013785">
    <property type="entry name" value="Aldolase_TIM"/>
</dbReference>
<dbReference type="InterPro" id="IPR006062">
    <property type="entry name" value="His_biosynth"/>
</dbReference>
<dbReference type="InterPro" id="IPR004651">
    <property type="entry name" value="HisF"/>
</dbReference>
<dbReference type="InterPro" id="IPR050064">
    <property type="entry name" value="IGPS_HisA/HisF"/>
</dbReference>
<dbReference type="InterPro" id="IPR011060">
    <property type="entry name" value="RibuloseP-bd_barrel"/>
</dbReference>
<dbReference type="NCBIfam" id="TIGR00735">
    <property type="entry name" value="hisF"/>
    <property type="match status" value="1"/>
</dbReference>
<dbReference type="PANTHER" id="PTHR21235:SF2">
    <property type="entry name" value="IMIDAZOLE GLYCEROL PHOSPHATE SYNTHASE HISHF"/>
    <property type="match status" value="1"/>
</dbReference>
<dbReference type="PANTHER" id="PTHR21235">
    <property type="entry name" value="IMIDAZOLE GLYCEROL PHOSPHATE SYNTHASE SUBUNIT HISF/H IGP SYNTHASE SUBUNIT HISF/H"/>
    <property type="match status" value="1"/>
</dbReference>
<dbReference type="Pfam" id="PF00977">
    <property type="entry name" value="His_biosynth"/>
    <property type="match status" value="1"/>
</dbReference>
<dbReference type="SUPFAM" id="SSF51366">
    <property type="entry name" value="Ribulose-phoshate binding barrel"/>
    <property type="match status" value="1"/>
</dbReference>
<keyword id="KW-0028">Amino-acid biosynthesis</keyword>
<keyword id="KW-0963">Cytoplasm</keyword>
<keyword id="KW-0368">Histidine biosynthesis</keyword>
<keyword id="KW-0456">Lyase</keyword>
<gene>
    <name evidence="1" type="primary">hisF</name>
    <name type="ordered locus">Ajs_0775</name>
</gene>
<organism>
    <name type="scientific">Acidovorax sp. (strain JS42)</name>
    <dbReference type="NCBI Taxonomy" id="232721"/>
    <lineage>
        <taxon>Bacteria</taxon>
        <taxon>Pseudomonadati</taxon>
        <taxon>Pseudomonadota</taxon>
        <taxon>Betaproteobacteria</taxon>
        <taxon>Burkholderiales</taxon>
        <taxon>Comamonadaceae</taxon>
        <taxon>Acidovorax</taxon>
    </lineage>
</organism>
<evidence type="ECO:0000255" key="1">
    <source>
        <dbReference type="HAMAP-Rule" id="MF_01013"/>
    </source>
</evidence>
<feature type="chain" id="PRO_1000063015" description="Imidazole glycerol phosphate synthase subunit HisF">
    <location>
        <begin position="1"/>
        <end position="259"/>
    </location>
</feature>
<feature type="active site" evidence="1">
    <location>
        <position position="11"/>
    </location>
</feature>
<feature type="active site" evidence="1">
    <location>
        <position position="130"/>
    </location>
</feature>
<accession>A1W444</accession>
<proteinExistence type="inferred from homology"/>
<reference key="1">
    <citation type="submission" date="2006-12" db="EMBL/GenBank/DDBJ databases">
        <title>Complete sequence of chromosome 1 of Acidovorax sp. JS42.</title>
        <authorList>
            <person name="Copeland A."/>
            <person name="Lucas S."/>
            <person name="Lapidus A."/>
            <person name="Barry K."/>
            <person name="Detter J.C."/>
            <person name="Glavina del Rio T."/>
            <person name="Dalin E."/>
            <person name="Tice H."/>
            <person name="Pitluck S."/>
            <person name="Chertkov O."/>
            <person name="Brettin T."/>
            <person name="Bruce D."/>
            <person name="Han C."/>
            <person name="Tapia R."/>
            <person name="Gilna P."/>
            <person name="Schmutz J."/>
            <person name="Larimer F."/>
            <person name="Land M."/>
            <person name="Hauser L."/>
            <person name="Kyrpides N."/>
            <person name="Kim E."/>
            <person name="Stahl D."/>
            <person name="Richardson P."/>
        </authorList>
    </citation>
    <scope>NUCLEOTIDE SEQUENCE [LARGE SCALE GENOMIC DNA]</scope>
    <source>
        <strain>JS42</strain>
    </source>
</reference>
<protein>
    <recommendedName>
        <fullName evidence="1">Imidazole glycerol phosphate synthase subunit HisF</fullName>
        <ecNumber evidence="1">4.3.2.10</ecNumber>
    </recommendedName>
    <alternativeName>
        <fullName evidence="1">IGP synthase cyclase subunit</fullName>
    </alternativeName>
    <alternativeName>
        <fullName evidence="1">IGP synthase subunit HisF</fullName>
    </alternativeName>
    <alternativeName>
        <fullName evidence="1">ImGP synthase subunit HisF</fullName>
        <shortName evidence="1">IGPS subunit HisF</shortName>
    </alternativeName>
</protein>
<name>HIS6_ACISJ</name>